<keyword id="KW-0067">ATP-binding</keyword>
<keyword id="KW-0436">Ligase</keyword>
<keyword id="KW-0460">Magnesium</keyword>
<keyword id="KW-0479">Metal-binding</keyword>
<keyword id="KW-0547">Nucleotide-binding</keyword>
<keyword id="KW-0658">Purine biosynthesis</keyword>
<keyword id="KW-1185">Reference proteome</keyword>
<evidence type="ECO:0000255" key="1">
    <source>
        <dbReference type="HAMAP-Rule" id="MF_01643"/>
    </source>
</evidence>
<feature type="chain" id="PRO_0000319213" description="Formate-dependent phosphoribosylglycinamide formyltransferase">
    <location>
        <begin position="1"/>
        <end position="393"/>
    </location>
</feature>
<feature type="domain" description="ATP-grasp" evidence="1">
    <location>
        <begin position="119"/>
        <end position="308"/>
    </location>
</feature>
<feature type="binding site" evidence="1">
    <location>
        <begin position="22"/>
        <end position="23"/>
    </location>
    <ligand>
        <name>N(1)-(5-phospho-beta-D-ribosyl)glycinamide</name>
        <dbReference type="ChEBI" id="CHEBI:143788"/>
    </ligand>
</feature>
<feature type="binding site" evidence="1">
    <location>
        <position position="82"/>
    </location>
    <ligand>
        <name>N(1)-(5-phospho-beta-D-ribosyl)glycinamide</name>
        <dbReference type="ChEBI" id="CHEBI:143788"/>
    </ligand>
</feature>
<feature type="binding site" evidence="1">
    <location>
        <position position="114"/>
    </location>
    <ligand>
        <name>ATP</name>
        <dbReference type="ChEBI" id="CHEBI:30616"/>
    </ligand>
</feature>
<feature type="binding site" evidence="1">
    <location>
        <position position="155"/>
    </location>
    <ligand>
        <name>ATP</name>
        <dbReference type="ChEBI" id="CHEBI:30616"/>
    </ligand>
</feature>
<feature type="binding site" evidence="1">
    <location>
        <begin position="160"/>
        <end position="165"/>
    </location>
    <ligand>
        <name>ATP</name>
        <dbReference type="ChEBI" id="CHEBI:30616"/>
    </ligand>
</feature>
<feature type="binding site" evidence="1">
    <location>
        <begin position="195"/>
        <end position="198"/>
    </location>
    <ligand>
        <name>ATP</name>
        <dbReference type="ChEBI" id="CHEBI:30616"/>
    </ligand>
</feature>
<feature type="binding site" evidence="1">
    <location>
        <position position="203"/>
    </location>
    <ligand>
        <name>ATP</name>
        <dbReference type="ChEBI" id="CHEBI:30616"/>
    </ligand>
</feature>
<feature type="binding site" evidence="1">
    <location>
        <position position="267"/>
    </location>
    <ligand>
        <name>Mg(2+)</name>
        <dbReference type="ChEBI" id="CHEBI:18420"/>
    </ligand>
</feature>
<feature type="binding site" evidence="1">
    <location>
        <position position="279"/>
    </location>
    <ligand>
        <name>Mg(2+)</name>
        <dbReference type="ChEBI" id="CHEBI:18420"/>
    </ligand>
</feature>
<feature type="binding site" evidence="1">
    <location>
        <position position="286"/>
    </location>
    <ligand>
        <name>N(1)-(5-phospho-beta-D-ribosyl)glycinamide</name>
        <dbReference type="ChEBI" id="CHEBI:143788"/>
    </ligand>
</feature>
<feature type="binding site" evidence="1">
    <location>
        <position position="356"/>
    </location>
    <ligand>
        <name>N(1)-(5-phospho-beta-D-ribosyl)glycinamide</name>
        <dbReference type="ChEBI" id="CHEBI:143788"/>
    </ligand>
</feature>
<feature type="binding site" evidence="1">
    <location>
        <begin position="363"/>
        <end position="364"/>
    </location>
    <ligand>
        <name>N(1)-(5-phospho-beta-D-ribosyl)glycinamide</name>
        <dbReference type="ChEBI" id="CHEBI:143788"/>
    </ligand>
</feature>
<name>PURT_PSEPK</name>
<gene>
    <name evidence="1" type="primary">purT</name>
    <name type="ordered locus">PP_1457</name>
</gene>
<comment type="function">
    <text evidence="1">Involved in the de novo purine biosynthesis. Catalyzes the transfer of formate to 5-phospho-ribosyl-glycinamide (GAR), producing 5-phospho-ribosyl-N-formylglycinamide (FGAR). Formate is provided by PurU via hydrolysis of 10-formyl-tetrahydrofolate.</text>
</comment>
<comment type="catalytic activity">
    <reaction evidence="1">
        <text>N(1)-(5-phospho-beta-D-ribosyl)glycinamide + formate + ATP = N(2)-formyl-N(1)-(5-phospho-beta-D-ribosyl)glycinamide + ADP + phosphate + H(+)</text>
        <dbReference type="Rhea" id="RHEA:24829"/>
        <dbReference type="ChEBI" id="CHEBI:15378"/>
        <dbReference type="ChEBI" id="CHEBI:15740"/>
        <dbReference type="ChEBI" id="CHEBI:30616"/>
        <dbReference type="ChEBI" id="CHEBI:43474"/>
        <dbReference type="ChEBI" id="CHEBI:143788"/>
        <dbReference type="ChEBI" id="CHEBI:147286"/>
        <dbReference type="ChEBI" id="CHEBI:456216"/>
        <dbReference type="EC" id="6.3.1.21"/>
    </reaction>
    <physiologicalReaction direction="left-to-right" evidence="1">
        <dbReference type="Rhea" id="RHEA:24830"/>
    </physiologicalReaction>
</comment>
<comment type="pathway">
    <text evidence="1">Purine metabolism; IMP biosynthesis via de novo pathway; N(2)-formyl-N(1)-(5-phospho-D-ribosyl)glycinamide from N(1)-(5-phospho-D-ribosyl)glycinamide (formate route): step 1/1.</text>
</comment>
<comment type="subunit">
    <text evidence="1">Homodimer.</text>
</comment>
<comment type="similarity">
    <text evidence="1">Belongs to the PurK/PurT family.</text>
</comment>
<dbReference type="EC" id="6.3.1.21" evidence="1"/>
<dbReference type="EMBL" id="AE015451">
    <property type="protein sequence ID" value="AAN67079.1"/>
    <property type="molecule type" value="Genomic_DNA"/>
</dbReference>
<dbReference type="RefSeq" id="NP_743615.1">
    <property type="nucleotide sequence ID" value="NC_002947.4"/>
</dbReference>
<dbReference type="RefSeq" id="WP_010952557.1">
    <property type="nucleotide sequence ID" value="NZ_CP169744.1"/>
</dbReference>
<dbReference type="SMR" id="Q88MW1"/>
<dbReference type="STRING" id="160488.PP_1457"/>
<dbReference type="PaxDb" id="160488-PP_1457"/>
<dbReference type="GeneID" id="83682008"/>
<dbReference type="KEGG" id="ppu:PP_1457"/>
<dbReference type="PATRIC" id="fig|160488.4.peg.1547"/>
<dbReference type="eggNOG" id="COG0027">
    <property type="taxonomic scope" value="Bacteria"/>
</dbReference>
<dbReference type="HOGENOM" id="CLU_011534_1_3_6"/>
<dbReference type="OrthoDB" id="9804625at2"/>
<dbReference type="PhylomeDB" id="Q88MW1"/>
<dbReference type="BioCyc" id="PPUT160488:G1G01-1549-MONOMER"/>
<dbReference type="UniPathway" id="UPA00074">
    <property type="reaction ID" value="UER00127"/>
</dbReference>
<dbReference type="Proteomes" id="UP000000556">
    <property type="component" value="Chromosome"/>
</dbReference>
<dbReference type="GO" id="GO:0005829">
    <property type="term" value="C:cytosol"/>
    <property type="evidence" value="ECO:0007669"/>
    <property type="project" value="TreeGrafter"/>
</dbReference>
<dbReference type="GO" id="GO:0005524">
    <property type="term" value="F:ATP binding"/>
    <property type="evidence" value="ECO:0007669"/>
    <property type="project" value="UniProtKB-UniRule"/>
</dbReference>
<dbReference type="GO" id="GO:0000287">
    <property type="term" value="F:magnesium ion binding"/>
    <property type="evidence" value="ECO:0007669"/>
    <property type="project" value="InterPro"/>
</dbReference>
<dbReference type="GO" id="GO:0043815">
    <property type="term" value="F:phosphoribosylglycinamide formyltransferase 2 activity"/>
    <property type="evidence" value="ECO:0007669"/>
    <property type="project" value="UniProtKB-UniRule"/>
</dbReference>
<dbReference type="GO" id="GO:0004644">
    <property type="term" value="F:phosphoribosylglycinamide formyltransferase activity"/>
    <property type="evidence" value="ECO:0007669"/>
    <property type="project" value="InterPro"/>
</dbReference>
<dbReference type="GO" id="GO:0006189">
    <property type="term" value="P:'de novo' IMP biosynthetic process"/>
    <property type="evidence" value="ECO:0007669"/>
    <property type="project" value="UniProtKB-UniRule"/>
</dbReference>
<dbReference type="FunFam" id="3.30.1490.20:FF:000013">
    <property type="entry name" value="Formate-dependent phosphoribosylglycinamide formyltransferase"/>
    <property type="match status" value="1"/>
</dbReference>
<dbReference type="FunFam" id="3.30.470.20:FF:000027">
    <property type="entry name" value="Formate-dependent phosphoribosylglycinamide formyltransferase"/>
    <property type="match status" value="1"/>
</dbReference>
<dbReference type="FunFam" id="3.40.50.20:FF:000007">
    <property type="entry name" value="Formate-dependent phosphoribosylglycinamide formyltransferase"/>
    <property type="match status" value="1"/>
</dbReference>
<dbReference type="Gene3D" id="3.40.50.20">
    <property type="match status" value="1"/>
</dbReference>
<dbReference type="Gene3D" id="3.30.1490.20">
    <property type="entry name" value="ATP-grasp fold, A domain"/>
    <property type="match status" value="1"/>
</dbReference>
<dbReference type="Gene3D" id="3.30.470.20">
    <property type="entry name" value="ATP-grasp fold, B domain"/>
    <property type="match status" value="1"/>
</dbReference>
<dbReference type="HAMAP" id="MF_01643">
    <property type="entry name" value="PurT"/>
    <property type="match status" value="1"/>
</dbReference>
<dbReference type="InterPro" id="IPR011761">
    <property type="entry name" value="ATP-grasp"/>
</dbReference>
<dbReference type="InterPro" id="IPR003135">
    <property type="entry name" value="ATP-grasp_carboxylate-amine"/>
</dbReference>
<dbReference type="InterPro" id="IPR013815">
    <property type="entry name" value="ATP_grasp_subdomain_1"/>
</dbReference>
<dbReference type="InterPro" id="IPR016185">
    <property type="entry name" value="PreATP-grasp_dom_sf"/>
</dbReference>
<dbReference type="InterPro" id="IPR005862">
    <property type="entry name" value="PurT"/>
</dbReference>
<dbReference type="InterPro" id="IPR054350">
    <property type="entry name" value="PurT/PurK_preATP-grasp"/>
</dbReference>
<dbReference type="InterPro" id="IPR048740">
    <property type="entry name" value="PurT_C"/>
</dbReference>
<dbReference type="InterPro" id="IPR011054">
    <property type="entry name" value="Rudment_hybrid_motif"/>
</dbReference>
<dbReference type="NCBIfam" id="NF006766">
    <property type="entry name" value="PRK09288.1"/>
    <property type="match status" value="1"/>
</dbReference>
<dbReference type="NCBIfam" id="TIGR01142">
    <property type="entry name" value="purT"/>
    <property type="match status" value="1"/>
</dbReference>
<dbReference type="PANTHER" id="PTHR43055">
    <property type="entry name" value="FORMATE-DEPENDENT PHOSPHORIBOSYLGLYCINAMIDE FORMYLTRANSFERASE"/>
    <property type="match status" value="1"/>
</dbReference>
<dbReference type="PANTHER" id="PTHR43055:SF1">
    <property type="entry name" value="FORMATE-DEPENDENT PHOSPHORIBOSYLGLYCINAMIDE FORMYLTRANSFERASE"/>
    <property type="match status" value="1"/>
</dbReference>
<dbReference type="Pfam" id="PF02222">
    <property type="entry name" value="ATP-grasp"/>
    <property type="match status" value="1"/>
</dbReference>
<dbReference type="Pfam" id="PF21244">
    <property type="entry name" value="PurT_C"/>
    <property type="match status" value="1"/>
</dbReference>
<dbReference type="Pfam" id="PF22660">
    <property type="entry name" value="RS_preATP-grasp-like"/>
    <property type="match status" value="1"/>
</dbReference>
<dbReference type="SUPFAM" id="SSF56059">
    <property type="entry name" value="Glutathione synthetase ATP-binding domain-like"/>
    <property type="match status" value="1"/>
</dbReference>
<dbReference type="SUPFAM" id="SSF52440">
    <property type="entry name" value="PreATP-grasp domain"/>
    <property type="match status" value="1"/>
</dbReference>
<dbReference type="SUPFAM" id="SSF51246">
    <property type="entry name" value="Rudiment single hybrid motif"/>
    <property type="match status" value="1"/>
</dbReference>
<dbReference type="PROSITE" id="PS50975">
    <property type="entry name" value="ATP_GRASP"/>
    <property type="match status" value="1"/>
</dbReference>
<proteinExistence type="inferred from homology"/>
<sequence length="393" mass="42576">MTRIGTPLSPTATRVLLCGCGELGKEVVIELQRLGVEVIAVDRYANAPAMQVAHRSHVVNMLDGVALRAVIEAEKPHYIVPEIEAIATATLVELENEGFTVVPTARATQLTMNREGIRRLAAEELDLPTSPYHFADTYEDYAKAVADLGYPCVVKPVMSSSGKGQSLLRSDADLQKSWDYAQEGGRAGKGRVIVEGFIDFEYEITLLTVRHVGGTTFLEPVGHRQEKGDYQESWQPQAMSPKALAESQRVAKAVTDALGGRGLFGVELFVKGDQVWFSEVSPRPHDTGLVTLISQDLSQFALHARAILGLPIPVVRQFGPSASAVILPEGQSQQTSFANLGAALSEPDTAIRLFGKPEINGTRRMGVCLARDESVELARAKATRASQAVKVEF</sequence>
<protein>
    <recommendedName>
        <fullName evidence="1">Formate-dependent phosphoribosylglycinamide formyltransferase</fullName>
        <ecNumber evidence="1">6.3.1.21</ecNumber>
    </recommendedName>
    <alternativeName>
        <fullName evidence="1">5'-phosphoribosylglycinamide transformylase 2</fullName>
    </alternativeName>
    <alternativeName>
        <fullName evidence="1">Formate-dependent GAR transformylase</fullName>
    </alternativeName>
    <alternativeName>
        <fullName evidence="1">GAR transformylase 2</fullName>
        <shortName evidence="1">GART 2</shortName>
    </alternativeName>
    <alternativeName>
        <fullName evidence="1">Non-folate glycinamide ribonucleotide transformylase</fullName>
    </alternativeName>
    <alternativeName>
        <fullName evidence="1">Phosphoribosylglycinamide formyltransferase 2</fullName>
    </alternativeName>
</protein>
<reference key="1">
    <citation type="journal article" date="2002" name="Environ. Microbiol.">
        <title>Complete genome sequence and comparative analysis of the metabolically versatile Pseudomonas putida KT2440.</title>
        <authorList>
            <person name="Nelson K.E."/>
            <person name="Weinel C."/>
            <person name="Paulsen I.T."/>
            <person name="Dodson R.J."/>
            <person name="Hilbert H."/>
            <person name="Martins dos Santos V.A.P."/>
            <person name="Fouts D.E."/>
            <person name="Gill S.R."/>
            <person name="Pop M."/>
            <person name="Holmes M."/>
            <person name="Brinkac L.M."/>
            <person name="Beanan M.J."/>
            <person name="DeBoy R.T."/>
            <person name="Daugherty S.C."/>
            <person name="Kolonay J.F."/>
            <person name="Madupu R."/>
            <person name="Nelson W.C."/>
            <person name="White O."/>
            <person name="Peterson J.D."/>
            <person name="Khouri H.M."/>
            <person name="Hance I."/>
            <person name="Chris Lee P."/>
            <person name="Holtzapple E.K."/>
            <person name="Scanlan D."/>
            <person name="Tran K."/>
            <person name="Moazzez A."/>
            <person name="Utterback T.R."/>
            <person name="Rizzo M."/>
            <person name="Lee K."/>
            <person name="Kosack D."/>
            <person name="Moestl D."/>
            <person name="Wedler H."/>
            <person name="Lauber J."/>
            <person name="Stjepandic D."/>
            <person name="Hoheisel J."/>
            <person name="Straetz M."/>
            <person name="Heim S."/>
            <person name="Kiewitz C."/>
            <person name="Eisen J.A."/>
            <person name="Timmis K.N."/>
            <person name="Duesterhoeft A."/>
            <person name="Tuemmler B."/>
            <person name="Fraser C.M."/>
        </authorList>
    </citation>
    <scope>NUCLEOTIDE SEQUENCE [LARGE SCALE GENOMIC DNA]</scope>
    <source>
        <strain>ATCC 47054 / DSM 6125 / CFBP 8728 / NCIMB 11950 / KT2440</strain>
    </source>
</reference>
<accession>Q88MW1</accession>
<organism>
    <name type="scientific">Pseudomonas putida (strain ATCC 47054 / DSM 6125 / CFBP 8728 / NCIMB 11950 / KT2440)</name>
    <dbReference type="NCBI Taxonomy" id="160488"/>
    <lineage>
        <taxon>Bacteria</taxon>
        <taxon>Pseudomonadati</taxon>
        <taxon>Pseudomonadota</taxon>
        <taxon>Gammaproteobacteria</taxon>
        <taxon>Pseudomonadales</taxon>
        <taxon>Pseudomonadaceae</taxon>
        <taxon>Pseudomonas</taxon>
    </lineage>
</organism>